<proteinExistence type="evidence at transcript level"/>
<name>HYD1_TRIAP</name>
<dbReference type="EMBL" id="BLZH01000009">
    <property type="protein sequence ID" value="GFP57915.1"/>
    <property type="molecule type" value="Genomic_DNA"/>
</dbReference>
<dbReference type="OrthoDB" id="3557221at2759"/>
<dbReference type="Proteomes" id="UP000517252">
    <property type="component" value="Unassembled WGS sequence"/>
</dbReference>
<gene>
    <name evidence="6" type="primary">Hyd1</name>
    <name type="ORF">TASIC1_0009025200</name>
</gene>
<keyword id="KW-0134">Cell wall</keyword>
<keyword id="KW-1015">Disulfide bond</keyword>
<keyword id="KW-0325">Glycoprotein</keyword>
<keyword id="KW-1185">Reference proteome</keyword>
<keyword id="KW-0964">Secreted</keyword>
<keyword id="KW-0732">Signal</keyword>
<organism>
    <name type="scientific">Trichoderma asperellum</name>
    <name type="common">Filamentous fungus</name>
    <dbReference type="NCBI Taxonomy" id="101201"/>
    <lineage>
        <taxon>Eukaryota</taxon>
        <taxon>Fungi</taxon>
        <taxon>Dikarya</taxon>
        <taxon>Ascomycota</taxon>
        <taxon>Pezizomycotina</taxon>
        <taxon>Sordariomycetes</taxon>
        <taxon>Hypocreomycetidae</taxon>
        <taxon>Hypocreales</taxon>
        <taxon>Hypocreaceae</taxon>
        <taxon>Trichoderma</taxon>
    </lineage>
</organism>
<protein>
    <recommendedName>
        <fullName evidence="6">Class I hydrophobin 1</fullName>
    </recommendedName>
</protein>
<accession>A0A6V8R0V1</accession>
<evidence type="ECO:0000250" key="1">
    <source>
        <dbReference type="UniProtKB" id="P79073"/>
    </source>
</evidence>
<evidence type="ECO:0000250" key="2">
    <source>
        <dbReference type="UniProtKB" id="Q04571"/>
    </source>
</evidence>
<evidence type="ECO:0000255" key="3"/>
<evidence type="ECO:0000255" key="4">
    <source>
        <dbReference type="PROSITE-ProRule" id="PRU00498"/>
    </source>
</evidence>
<evidence type="ECO:0000269" key="5">
    <source>
    </source>
</evidence>
<evidence type="ECO:0000303" key="6">
    <source>
    </source>
</evidence>
<evidence type="ECO:0000305" key="7"/>
<sequence length="145" mass="15454">MYASVIIYTLVALCGVMSSPVQEAEVAPRAIEPRMPTFADIPFPRFPSHNNHHHNEKDKGKDKGNGKGVDKNNGGGCDTGTNTQLNACSAGSPYCCSSDGNGGHICSNTTACDQKVICCNNNNGFQICIGEIDFNVPVTINIIYD</sequence>
<feature type="signal peptide" evidence="3">
    <location>
        <begin position="1"/>
        <end position="18"/>
    </location>
</feature>
<feature type="chain" id="PRO_5027857257" description="Class I hydrophobin 1">
    <location>
        <begin position="19"/>
        <end position="145"/>
    </location>
</feature>
<feature type="glycosylation site" description="N-linked (GlcNAc...) asparagine" evidence="4">
    <location>
        <position position="108"/>
    </location>
</feature>
<feature type="disulfide bond" evidence="1">
    <location>
        <begin position="88"/>
        <end position="118"/>
    </location>
</feature>
<feature type="disulfide bond" evidence="1">
    <location>
        <begin position="95"/>
        <end position="112"/>
    </location>
</feature>
<feature type="disulfide bond" evidence="1">
    <location>
        <begin position="96"/>
        <end position="106"/>
    </location>
</feature>
<feature type="disulfide bond" evidence="1">
    <location>
        <begin position="119"/>
        <end position="128"/>
    </location>
</feature>
<comment type="function">
    <text evidence="5 7">Aerial growth, conidiation, and dispersal of filamentous fungi in the environment rely upon a capability of their secreting small amphipathic proteins called hydrophobins (HPBs) with low sequence identity. Class I can self-assemble into an outermost layer of rodlet bundles on aerial cell surfaces, conferring cellular hydrophobicity that supports fungal growth, development and dispersal; whereas Class II form highly ordered films at water-air interfaces through intermolecular interactions but contribute nothing to the rodlet structure (Probable). Hyd1 is a class I hydrophobin that is involved in plant root attachment and colonization, and that might also protect the growing hyphae from locally synthesized plant defense compounds during the first stages of cucumber interaction, allowing this opportunistic, non-pathogenic fungus to colonize the intercellular spaces of the plant root (PubMed:20507444).</text>
</comment>
<comment type="subunit">
    <text evidence="2">Self-assembles to form functional amyloid fibrils called rodlets. Self-assembly into fibrillar rodlets occurs spontaneously at hydrophobic:hydrophilic interfaces and the rodlets further associate laterally to form amphipathic monolayers.</text>
</comment>
<comment type="subcellular location">
    <subcellularLocation>
        <location evidence="5">Secreted</location>
    </subcellularLocation>
    <subcellularLocation>
        <location evidence="5">Secreted</location>
        <location evidence="5">Cell wall</location>
    </subcellularLocation>
    <text evidence="5">present in the trifluoroacetic-acid-soluble fraction of mycelial cell walls.</text>
</comment>
<comment type="induction">
    <text evidence="5">Expression is detected in planta up to 5 days after root inoculation (PubMed:20507444). Constitutively expressed at low levels in mycelia in young cultures but gene expression is not detected in sporulating hyphae or in non-germinating spores (PubMed:20507444). Carbon limitation stimulates expression whereas nitrogen or phosphate starvation down-regulate expression (PubMed:20507444).</text>
</comment>
<comment type="disruption phenotype">
    <text evidence="5">Does not affect mycoparasitic activity but alters wettability and severely impairs root attachment and colonization.</text>
</comment>
<comment type="similarity">
    <text evidence="7">Belongs to the fungal hydrophobin family.</text>
</comment>
<reference key="1">
    <citation type="journal article" date="2020" name="Microbiol. Resour. Announc.">
        <title>Draft Genome Sequence of Glycoside Hydrolase-Producing Trichoderma asperellum Strain IC-1.</title>
        <authorList>
            <person name="Takahashi H."/>
            <person name="Sakagawa E."/>
            <person name="Toyoda R."/>
            <person name="Motomura T."/>
            <person name="Murase M."/>
            <person name="Takahashi A."/>
            <person name="Fukuyoshi S."/>
            <person name="Kanamasa S."/>
        </authorList>
    </citation>
    <scope>NUCLEOTIDE SEQUENCE [LARGE SCALE GENOMIC DNA]</scope>
    <source>
        <strain>IC-1</strain>
    </source>
</reference>
<reference key="2">
    <citation type="journal article" date="2006" name="Mol. Plant Pathol.">
        <title>TasHyd1, a new hydrophobin gene from the biocontrol agent Trichoderma asperellum, is involved in plant root colonization.</title>
        <authorList>
            <person name="Viterbo A."/>
            <person name="Chet I."/>
        </authorList>
    </citation>
    <scope>INDUCTION</scope>
    <scope>SUBCELLULAR LOCATION</scope>
    <scope>FUNCTION</scope>
    <scope>DISRUPTION PHENOTYPE</scope>
</reference>